<gene>
    <name type="primary">malQ</name>
    <name type="ordered locus">CPn_0326</name>
    <name type="ordered locus">CP_0431</name>
    <name type="ordered locus">CpB0336</name>
</gene>
<keyword id="KW-0119">Carbohydrate metabolism</keyword>
<keyword id="KW-0963">Cytoplasm</keyword>
<keyword id="KW-0328">Glycosyltransferase</keyword>
<keyword id="KW-0808">Transferase</keyword>
<dbReference type="EC" id="2.4.1.25"/>
<dbReference type="EMBL" id="AE001363">
    <property type="protein sequence ID" value="AAD18475.1"/>
    <property type="molecule type" value="Genomic_DNA"/>
</dbReference>
<dbReference type="EMBL" id="AE002161">
    <property type="protein sequence ID" value="AAF38273.1"/>
    <property type="molecule type" value="Genomic_DNA"/>
</dbReference>
<dbReference type="EMBL" id="BA000008">
    <property type="protein sequence ID" value="BAA98536.1"/>
    <property type="molecule type" value="Genomic_DNA"/>
</dbReference>
<dbReference type="EMBL" id="AE009440">
    <property type="protein sequence ID" value="AAP98269.1"/>
    <property type="molecule type" value="Genomic_DNA"/>
</dbReference>
<dbReference type="PIR" id="F86531">
    <property type="entry name" value="F86531"/>
</dbReference>
<dbReference type="PIR" id="G72091">
    <property type="entry name" value="G72091"/>
</dbReference>
<dbReference type="RefSeq" id="NP_224531.1">
    <property type="nucleotide sequence ID" value="NC_000922.1"/>
</dbReference>
<dbReference type="RefSeq" id="WP_010882974.1">
    <property type="nucleotide sequence ID" value="NZ_LN847257.1"/>
</dbReference>
<dbReference type="SMR" id="Q9Z8L2"/>
<dbReference type="STRING" id="406984.CPK_ORF00835"/>
<dbReference type="CAZy" id="GH77">
    <property type="family name" value="Glycoside Hydrolase Family 77"/>
</dbReference>
<dbReference type="GeneID" id="45050375"/>
<dbReference type="KEGG" id="cpa:CP_0431"/>
<dbReference type="KEGG" id="cpj:malQ"/>
<dbReference type="KEGG" id="cpn:CPn_0326"/>
<dbReference type="KEGG" id="cpt:CpB0336"/>
<dbReference type="PATRIC" id="fig|115713.3.peg.360"/>
<dbReference type="eggNOG" id="COG1640">
    <property type="taxonomic scope" value="Bacteria"/>
</dbReference>
<dbReference type="HOGENOM" id="CLU_014132_2_1_0"/>
<dbReference type="OrthoDB" id="9811841at2"/>
<dbReference type="Proteomes" id="UP000000583">
    <property type="component" value="Chromosome"/>
</dbReference>
<dbReference type="Proteomes" id="UP000000801">
    <property type="component" value="Chromosome"/>
</dbReference>
<dbReference type="GO" id="GO:0005737">
    <property type="term" value="C:cytoplasm"/>
    <property type="evidence" value="ECO:0007669"/>
    <property type="project" value="UniProtKB-SubCell"/>
</dbReference>
<dbReference type="GO" id="GO:0004134">
    <property type="term" value="F:4-alpha-glucanotransferase activity"/>
    <property type="evidence" value="ECO:0007669"/>
    <property type="project" value="UniProtKB-EC"/>
</dbReference>
<dbReference type="GO" id="GO:0005975">
    <property type="term" value="P:carbohydrate metabolic process"/>
    <property type="evidence" value="ECO:0007669"/>
    <property type="project" value="InterPro"/>
</dbReference>
<dbReference type="Gene3D" id="3.20.20.80">
    <property type="entry name" value="Glycosidases"/>
    <property type="match status" value="1"/>
</dbReference>
<dbReference type="InterPro" id="IPR003385">
    <property type="entry name" value="Glyco_hydro_77"/>
</dbReference>
<dbReference type="InterPro" id="IPR017853">
    <property type="entry name" value="Glycoside_hydrolase_SF"/>
</dbReference>
<dbReference type="NCBIfam" id="TIGR00217">
    <property type="entry name" value="malQ"/>
    <property type="match status" value="1"/>
</dbReference>
<dbReference type="NCBIfam" id="NF011081">
    <property type="entry name" value="PRK14508.1-4"/>
    <property type="match status" value="1"/>
</dbReference>
<dbReference type="PANTHER" id="PTHR32518">
    <property type="match status" value="1"/>
</dbReference>
<dbReference type="PANTHER" id="PTHR32518:SF3">
    <property type="entry name" value="4-ALPHA-GLUCANOTRANSFERASE"/>
    <property type="match status" value="1"/>
</dbReference>
<dbReference type="Pfam" id="PF02446">
    <property type="entry name" value="Glyco_hydro_77"/>
    <property type="match status" value="1"/>
</dbReference>
<dbReference type="SUPFAM" id="SSF51445">
    <property type="entry name" value="(Trans)glycosidases"/>
    <property type="match status" value="1"/>
</dbReference>
<evidence type="ECO:0000250" key="1"/>
<evidence type="ECO:0000305" key="2"/>
<protein>
    <recommendedName>
        <fullName>4-alpha-glucanotransferase</fullName>
        <ecNumber>2.4.1.25</ecNumber>
    </recommendedName>
    <alternativeName>
        <fullName>Amylomaltase</fullName>
    </alternativeName>
    <alternativeName>
        <fullName>Disproportionating enzyme</fullName>
        <shortName>D-enzyme</shortName>
    </alternativeName>
</protein>
<name>MALQ_CHLPN</name>
<organism>
    <name type="scientific">Chlamydia pneumoniae</name>
    <name type="common">Chlamydophila pneumoniae</name>
    <dbReference type="NCBI Taxonomy" id="83558"/>
    <lineage>
        <taxon>Bacteria</taxon>
        <taxon>Pseudomonadati</taxon>
        <taxon>Chlamydiota</taxon>
        <taxon>Chlamydiia</taxon>
        <taxon>Chlamydiales</taxon>
        <taxon>Chlamydiaceae</taxon>
        <taxon>Chlamydia/Chlamydophila group</taxon>
        <taxon>Chlamydia</taxon>
    </lineage>
</organism>
<reference key="1">
    <citation type="journal article" date="1999" name="Nat. Genet.">
        <title>Comparative genomes of Chlamydia pneumoniae and C. trachomatis.</title>
        <authorList>
            <person name="Kalman S."/>
            <person name="Mitchell W.P."/>
            <person name="Marathe R."/>
            <person name="Lammel C.J."/>
            <person name="Fan J."/>
            <person name="Hyman R.W."/>
            <person name="Olinger L."/>
            <person name="Grimwood J."/>
            <person name="Davis R.W."/>
            <person name="Stephens R.S."/>
        </authorList>
    </citation>
    <scope>NUCLEOTIDE SEQUENCE [LARGE SCALE GENOMIC DNA]</scope>
    <source>
        <strain>CWL029</strain>
    </source>
</reference>
<reference key="2">
    <citation type="journal article" date="2000" name="Nucleic Acids Res.">
        <title>Genome sequences of Chlamydia trachomatis MoPn and Chlamydia pneumoniae AR39.</title>
        <authorList>
            <person name="Read T.D."/>
            <person name="Brunham R.C."/>
            <person name="Shen C."/>
            <person name="Gill S.R."/>
            <person name="Heidelberg J.F."/>
            <person name="White O."/>
            <person name="Hickey E.K."/>
            <person name="Peterson J.D."/>
            <person name="Utterback T.R."/>
            <person name="Berry K.J."/>
            <person name="Bass S."/>
            <person name="Linher K.D."/>
            <person name="Weidman J.F."/>
            <person name="Khouri H.M."/>
            <person name="Craven B."/>
            <person name="Bowman C."/>
            <person name="Dodson R.J."/>
            <person name="Gwinn M.L."/>
            <person name="Nelson W.C."/>
            <person name="DeBoy R.T."/>
            <person name="Kolonay J.F."/>
            <person name="McClarty G."/>
            <person name="Salzberg S.L."/>
            <person name="Eisen J.A."/>
            <person name="Fraser C.M."/>
        </authorList>
    </citation>
    <scope>NUCLEOTIDE SEQUENCE [LARGE SCALE GENOMIC DNA]</scope>
    <source>
        <strain>AR39</strain>
    </source>
</reference>
<reference key="3">
    <citation type="journal article" date="2000" name="Nucleic Acids Res.">
        <title>Comparison of whole genome sequences of Chlamydia pneumoniae J138 from Japan and CWL029 from USA.</title>
        <authorList>
            <person name="Shirai M."/>
            <person name="Hirakawa H."/>
            <person name="Kimoto M."/>
            <person name="Tabuchi M."/>
            <person name="Kishi F."/>
            <person name="Ouchi K."/>
            <person name="Shiba T."/>
            <person name="Ishii K."/>
            <person name="Hattori M."/>
            <person name="Kuhara S."/>
            <person name="Nakazawa T."/>
        </authorList>
    </citation>
    <scope>NUCLEOTIDE SEQUENCE [LARGE SCALE GENOMIC DNA]</scope>
    <source>
        <strain>J138</strain>
    </source>
</reference>
<reference key="4">
    <citation type="submission" date="2002-05" db="EMBL/GenBank/DDBJ databases">
        <title>The genome sequence of Chlamydia pneumoniae TW183 and comparison with other Chlamydia strains based on whole genome sequence analysis.</title>
        <authorList>
            <person name="Geng M.M."/>
            <person name="Schuhmacher A."/>
            <person name="Muehldorfer I."/>
            <person name="Bensch K.W."/>
            <person name="Schaefer K.P."/>
            <person name="Schneider S."/>
            <person name="Pohl T."/>
            <person name="Essig A."/>
            <person name="Marre R."/>
            <person name="Melchers K."/>
        </authorList>
    </citation>
    <scope>NUCLEOTIDE SEQUENCE [LARGE SCALE GENOMIC DNA]</scope>
    <source>
        <strain>TW-183</strain>
    </source>
</reference>
<feature type="chain" id="PRO_0000170121" description="4-alpha-glucanotransferase">
    <location>
        <begin position="1"/>
        <end position="526"/>
    </location>
</feature>
<proteinExistence type="inferred from homology"/>
<accession>Q9Z8L2</accession>
<accession>Q9JQ41</accession>
<comment type="catalytic activity">
    <reaction>
        <text>Transfers a segment of a (1-&gt;4)-alpha-D-glucan to a new position in an acceptor, which may be glucose or a (1-&gt;4)-alpha-D-glucan.</text>
        <dbReference type="EC" id="2.4.1.25"/>
    </reaction>
</comment>
<comment type="subcellular location">
    <subcellularLocation>
        <location evidence="1">Cytoplasm</location>
    </subcellularLocation>
</comment>
<comment type="similarity">
    <text evidence="2">Belongs to the disproportionating enzyme family.</text>
</comment>
<sequence length="526" mass="60993">MNVLKYTKHSPSAHAWKLIGTSPKHGIYLPLFSIHTKNSCGIGEFLDLIPLISWCQKQGFSVIQLLPLNDTGEDTSPYNSISSVALNPLFLSLSSLPNIDTIPEVAKKLQDMHELCSTPSVSYTQVKEKKWAFLREYYQKCCKSSLEGNSNFSEFLESERYWLYPYGTFRAIKHHMHGEPINNWPKSLTDQENFPDLTKKFHDEVLFFSYLQFLCYQQLCEVKAYADQHHVLLKGDLPILISKDSCDVWYFRDYFSSSRSVGAPPDLYNSEGQNWHLPIYNFSQLAKDDYIWWKERLRYAQNFYSVYRLDHIIGFFRLWIWDSSGRGRFIPDNPKDYIKQGTEILSTMLGASSMLPIGEDLGIIPQDVKTTLTHLGICGTRIPRWERNWESDSAFIPLKDYNPLSVTTLSTHDSDTFAQWWLNSPKEAKQFAKFLHLPFQKTLTTETQIDILKLSHESASIFHINLFNDYLALCPDLVSKNLQRERINTPGTISKKNWSYRVRPSLEELAIHKKFNGYIEKILTGL</sequence>